<organism>
    <name type="scientific">Morella cerifera</name>
    <name type="common">Wax myrtle</name>
    <name type="synonym">Myrica cerifera</name>
    <dbReference type="NCBI Taxonomy" id="3510"/>
    <lineage>
        <taxon>Eukaryota</taxon>
        <taxon>Viridiplantae</taxon>
        <taxon>Streptophyta</taxon>
        <taxon>Embryophyta</taxon>
        <taxon>Tracheophyta</taxon>
        <taxon>Spermatophyta</taxon>
        <taxon>Magnoliopsida</taxon>
        <taxon>eudicotyledons</taxon>
        <taxon>Gunneridae</taxon>
        <taxon>Pentapetalae</taxon>
        <taxon>rosids</taxon>
        <taxon>fabids</taxon>
        <taxon>Fagales</taxon>
        <taxon>Myricaceae</taxon>
        <taxon>Morella</taxon>
    </lineage>
</organism>
<geneLocation type="chloroplast"/>
<reference key="1">
    <citation type="journal article" date="1992" name="Science">
        <title>Carnivorous plants: phylogeny and structural evolution.</title>
        <authorList>
            <person name="Albert V.A."/>
            <person name="Williams S.E."/>
            <person name="Chase M.W."/>
        </authorList>
    </citation>
    <scope>NUCLEOTIDE SEQUENCE [GENOMIC DNA]</scope>
</reference>
<keyword id="KW-0113">Calvin cycle</keyword>
<keyword id="KW-0120">Carbon dioxide fixation</keyword>
<keyword id="KW-0150">Chloroplast</keyword>
<keyword id="KW-1015">Disulfide bond</keyword>
<keyword id="KW-0456">Lyase</keyword>
<keyword id="KW-0460">Magnesium</keyword>
<keyword id="KW-0479">Metal-binding</keyword>
<keyword id="KW-0488">Methylation</keyword>
<keyword id="KW-0503">Monooxygenase</keyword>
<keyword id="KW-0560">Oxidoreductase</keyword>
<keyword id="KW-0601">Photorespiration</keyword>
<keyword id="KW-0602">Photosynthesis</keyword>
<keyword id="KW-0934">Plastid</keyword>
<sequence length="465" mass="51541">VGFKAGVKDYKLTYYTPEYETKDTDILAAFRVTPQPGVPPEEAGAAVAAESSTGTWTTVWTDGLTSLDPYKGRCYHIEPVAGEESQFIAYVAYPLDLFEEGSVTNMFTSIVGNVFGFKALRALRLEDLRIPTAYVKTFQGPPHGIQVERDKLNKYGRPLLGCTIKPKLGLSAKNYGRAVYECLRGGLDFTKDDENVNSQPFMRWRDRFLFCAEAIYKSQAETGEIKGHYLNATAGTCEDMMKRAVFARELGVPIVMHDYLTGGFTANTTLAHYCRDNGLLLHIHRAMHAVIDRQKNHGMHFRVLAKALRMSGGDHIHAGTVVGKLEGEREITLGFVDLPRDDFIEKDRSRGIYFTQDWVSLPGVLPVASGGIHVWHMPALTEIFGDDSVLQFGGGTLGHPWGNAPGAVANRVALEACVQARNEGRDLAREGNEIIREASKWSPELAAACEVWKEIKFEFPAMDTL</sequence>
<feature type="chain" id="PRO_0000062535" description="Ribulose bisphosphate carboxylase large chain">
    <location>
        <begin position="1" status="less than"/>
        <end position="465"/>
    </location>
</feature>
<feature type="active site" description="Proton acceptor" evidence="1">
    <location>
        <position position="165"/>
    </location>
</feature>
<feature type="active site" description="Proton acceptor" evidence="1">
    <location>
        <position position="284"/>
    </location>
</feature>
<feature type="binding site" description="in homodimeric partner" evidence="1">
    <location>
        <position position="113"/>
    </location>
    <ligand>
        <name>substrate</name>
    </ligand>
</feature>
<feature type="binding site" evidence="1">
    <location>
        <position position="163"/>
    </location>
    <ligand>
        <name>substrate</name>
    </ligand>
</feature>
<feature type="binding site" evidence="1">
    <location>
        <position position="167"/>
    </location>
    <ligand>
        <name>substrate</name>
    </ligand>
</feature>
<feature type="binding site" description="via carbamate group" evidence="1">
    <location>
        <position position="191"/>
    </location>
    <ligand>
        <name>Mg(2+)</name>
        <dbReference type="ChEBI" id="CHEBI:18420"/>
    </ligand>
</feature>
<feature type="binding site" evidence="1">
    <location>
        <position position="193"/>
    </location>
    <ligand>
        <name>Mg(2+)</name>
        <dbReference type="ChEBI" id="CHEBI:18420"/>
    </ligand>
</feature>
<feature type="binding site" evidence="1">
    <location>
        <position position="194"/>
    </location>
    <ligand>
        <name>Mg(2+)</name>
        <dbReference type="ChEBI" id="CHEBI:18420"/>
    </ligand>
</feature>
<feature type="binding site" evidence="1">
    <location>
        <position position="285"/>
    </location>
    <ligand>
        <name>substrate</name>
    </ligand>
</feature>
<feature type="binding site" evidence="1">
    <location>
        <position position="317"/>
    </location>
    <ligand>
        <name>substrate</name>
    </ligand>
</feature>
<feature type="binding site" evidence="1">
    <location>
        <position position="369"/>
    </location>
    <ligand>
        <name>substrate</name>
    </ligand>
</feature>
<feature type="site" description="Transition state stabilizer" evidence="1">
    <location>
        <position position="324"/>
    </location>
</feature>
<feature type="modified residue" description="N6,N6,N6-trimethyllysine" evidence="1">
    <location>
        <position position="4"/>
    </location>
</feature>
<feature type="modified residue" description="N6-carboxylysine" evidence="1">
    <location>
        <position position="191"/>
    </location>
</feature>
<feature type="disulfide bond" description="Interchain; in linked form" evidence="1">
    <location>
        <position position="237"/>
    </location>
</feature>
<feature type="non-terminal residue">
    <location>
        <position position="1"/>
    </location>
</feature>
<gene>
    <name evidence="1" type="primary">rbcL</name>
</gene>
<dbReference type="EC" id="4.1.1.39" evidence="1"/>
<dbReference type="EMBL" id="L01934">
    <property type="protein sequence ID" value="AAA84470.2"/>
    <property type="molecule type" value="Genomic_DNA"/>
</dbReference>
<dbReference type="SMR" id="P28432"/>
<dbReference type="GO" id="GO:0009507">
    <property type="term" value="C:chloroplast"/>
    <property type="evidence" value="ECO:0007669"/>
    <property type="project" value="UniProtKB-SubCell"/>
</dbReference>
<dbReference type="GO" id="GO:0000287">
    <property type="term" value="F:magnesium ion binding"/>
    <property type="evidence" value="ECO:0007669"/>
    <property type="project" value="InterPro"/>
</dbReference>
<dbReference type="GO" id="GO:0004497">
    <property type="term" value="F:monooxygenase activity"/>
    <property type="evidence" value="ECO:0007669"/>
    <property type="project" value="UniProtKB-KW"/>
</dbReference>
<dbReference type="GO" id="GO:0016984">
    <property type="term" value="F:ribulose-bisphosphate carboxylase activity"/>
    <property type="evidence" value="ECO:0007669"/>
    <property type="project" value="UniProtKB-EC"/>
</dbReference>
<dbReference type="GO" id="GO:0009853">
    <property type="term" value="P:photorespiration"/>
    <property type="evidence" value="ECO:0007669"/>
    <property type="project" value="UniProtKB-KW"/>
</dbReference>
<dbReference type="GO" id="GO:0019253">
    <property type="term" value="P:reductive pentose-phosphate cycle"/>
    <property type="evidence" value="ECO:0007669"/>
    <property type="project" value="UniProtKB-KW"/>
</dbReference>
<dbReference type="CDD" id="cd08212">
    <property type="entry name" value="RuBisCO_large_I"/>
    <property type="match status" value="1"/>
</dbReference>
<dbReference type="FunFam" id="3.20.20.110:FF:000001">
    <property type="entry name" value="Ribulose bisphosphate carboxylase large chain"/>
    <property type="match status" value="1"/>
</dbReference>
<dbReference type="FunFam" id="3.30.70.150:FF:000001">
    <property type="entry name" value="Ribulose bisphosphate carboxylase large chain"/>
    <property type="match status" value="1"/>
</dbReference>
<dbReference type="Gene3D" id="3.20.20.110">
    <property type="entry name" value="Ribulose bisphosphate carboxylase, large subunit, C-terminal domain"/>
    <property type="match status" value="1"/>
</dbReference>
<dbReference type="Gene3D" id="3.30.70.150">
    <property type="entry name" value="RuBisCO large subunit, N-terminal domain"/>
    <property type="match status" value="1"/>
</dbReference>
<dbReference type="HAMAP" id="MF_01338">
    <property type="entry name" value="RuBisCO_L_type1"/>
    <property type="match status" value="1"/>
</dbReference>
<dbReference type="InterPro" id="IPR033966">
    <property type="entry name" value="RuBisCO"/>
</dbReference>
<dbReference type="InterPro" id="IPR020878">
    <property type="entry name" value="RuBisCo_large_chain_AS"/>
</dbReference>
<dbReference type="InterPro" id="IPR000685">
    <property type="entry name" value="RuBisCO_lsu_C"/>
</dbReference>
<dbReference type="InterPro" id="IPR036376">
    <property type="entry name" value="RuBisCO_lsu_C_sf"/>
</dbReference>
<dbReference type="InterPro" id="IPR017443">
    <property type="entry name" value="RuBisCO_lsu_fd_N"/>
</dbReference>
<dbReference type="InterPro" id="IPR036422">
    <property type="entry name" value="RuBisCO_lsu_N_sf"/>
</dbReference>
<dbReference type="InterPro" id="IPR020888">
    <property type="entry name" value="RuBisCO_lsuI"/>
</dbReference>
<dbReference type="NCBIfam" id="NF003252">
    <property type="entry name" value="PRK04208.1"/>
    <property type="match status" value="1"/>
</dbReference>
<dbReference type="PANTHER" id="PTHR42704">
    <property type="entry name" value="RIBULOSE BISPHOSPHATE CARBOXYLASE"/>
    <property type="match status" value="1"/>
</dbReference>
<dbReference type="PANTHER" id="PTHR42704:SF15">
    <property type="entry name" value="RIBULOSE BISPHOSPHATE CARBOXYLASE LARGE CHAIN"/>
    <property type="match status" value="1"/>
</dbReference>
<dbReference type="Pfam" id="PF00016">
    <property type="entry name" value="RuBisCO_large"/>
    <property type="match status" value="1"/>
</dbReference>
<dbReference type="Pfam" id="PF02788">
    <property type="entry name" value="RuBisCO_large_N"/>
    <property type="match status" value="1"/>
</dbReference>
<dbReference type="SFLD" id="SFLDG01052">
    <property type="entry name" value="RuBisCO"/>
    <property type="match status" value="1"/>
</dbReference>
<dbReference type="SFLD" id="SFLDS00014">
    <property type="entry name" value="RuBisCO"/>
    <property type="match status" value="1"/>
</dbReference>
<dbReference type="SFLD" id="SFLDG00301">
    <property type="entry name" value="RuBisCO-like_proteins"/>
    <property type="match status" value="1"/>
</dbReference>
<dbReference type="SUPFAM" id="SSF51649">
    <property type="entry name" value="RuBisCo, C-terminal domain"/>
    <property type="match status" value="1"/>
</dbReference>
<dbReference type="SUPFAM" id="SSF54966">
    <property type="entry name" value="RuBisCO, large subunit, small (N-terminal) domain"/>
    <property type="match status" value="1"/>
</dbReference>
<dbReference type="PROSITE" id="PS00157">
    <property type="entry name" value="RUBISCO_LARGE"/>
    <property type="match status" value="1"/>
</dbReference>
<name>RBL_MORCE</name>
<proteinExistence type="inferred from homology"/>
<protein>
    <recommendedName>
        <fullName evidence="1">Ribulose bisphosphate carboxylase large chain</fullName>
        <shortName evidence="1">RuBisCO large subunit</shortName>
        <ecNumber evidence="1">4.1.1.39</ecNumber>
    </recommendedName>
</protein>
<comment type="function">
    <text evidence="1">RuBisCO catalyzes two reactions: the carboxylation of D-ribulose 1,5-bisphosphate, the primary event in carbon dioxide fixation, as well as the oxidative fragmentation of the pentose substrate in the photorespiration process. Both reactions occur simultaneously and in competition at the same active site.</text>
</comment>
<comment type="catalytic activity">
    <reaction evidence="1">
        <text>2 (2R)-3-phosphoglycerate + 2 H(+) = D-ribulose 1,5-bisphosphate + CO2 + H2O</text>
        <dbReference type="Rhea" id="RHEA:23124"/>
        <dbReference type="ChEBI" id="CHEBI:15377"/>
        <dbReference type="ChEBI" id="CHEBI:15378"/>
        <dbReference type="ChEBI" id="CHEBI:16526"/>
        <dbReference type="ChEBI" id="CHEBI:57870"/>
        <dbReference type="ChEBI" id="CHEBI:58272"/>
        <dbReference type="EC" id="4.1.1.39"/>
    </reaction>
</comment>
<comment type="catalytic activity">
    <reaction evidence="1">
        <text>D-ribulose 1,5-bisphosphate + O2 = 2-phosphoglycolate + (2R)-3-phosphoglycerate + 2 H(+)</text>
        <dbReference type="Rhea" id="RHEA:36631"/>
        <dbReference type="ChEBI" id="CHEBI:15378"/>
        <dbReference type="ChEBI" id="CHEBI:15379"/>
        <dbReference type="ChEBI" id="CHEBI:57870"/>
        <dbReference type="ChEBI" id="CHEBI:58033"/>
        <dbReference type="ChEBI" id="CHEBI:58272"/>
    </reaction>
</comment>
<comment type="cofactor">
    <cofactor evidence="1">
        <name>Mg(2+)</name>
        <dbReference type="ChEBI" id="CHEBI:18420"/>
    </cofactor>
    <text evidence="1">Binds 1 Mg(2+) ion per subunit.</text>
</comment>
<comment type="subunit">
    <text evidence="1">Heterohexadecamer of 8 large chains and 8 small chains; disulfide-linked. The disulfide link is formed within the large subunit homodimers.</text>
</comment>
<comment type="subcellular location">
    <subcellularLocation>
        <location>Plastid</location>
        <location>Chloroplast</location>
    </subcellularLocation>
</comment>
<comment type="PTM">
    <text evidence="1">The disulfide bond which can form in the large chain dimeric partners within the hexadecamer appears to be associated with oxidative stress and protein turnover.</text>
</comment>
<comment type="miscellaneous">
    <text evidence="1">The basic functional RuBisCO is composed of a large chain homodimer in a 'head-to-tail' conformation. In form I RuBisCO this homodimer is arranged in a barrel-like tetramer with the small subunits forming a tetrameric 'cap' on each end of the 'barrel'.</text>
</comment>
<comment type="similarity">
    <text evidence="1">Belongs to the RuBisCO large chain family. Type I subfamily.</text>
</comment>
<accession>P28432</accession>
<evidence type="ECO:0000255" key="1">
    <source>
        <dbReference type="HAMAP-Rule" id="MF_01338"/>
    </source>
</evidence>